<keyword id="KW-0208">D-amino acid</keyword>
<keyword id="KW-0903">Direct protein sequencing</keyword>
<keyword id="KW-1015">Disulfide bond</keyword>
<keyword id="KW-1213">G-protein coupled receptor impairing toxin</keyword>
<keyword id="KW-0301">Gamma-carboxyglutamic acid</keyword>
<keyword id="KW-0379">Hydroxylation</keyword>
<keyword id="KW-0964">Secreted</keyword>
<keyword id="KW-0732">Signal</keyword>
<keyword id="KW-0800">Toxin</keyword>
<protein>
    <recommendedName>
        <fullName evidence="4 5">Consomatin Ro1</fullName>
        <shortName evidence="5">ConSST Ro1</shortName>
    </recommendedName>
    <alternativeName>
        <fullName evidence="5">Somatostatin-related peptide</fullName>
        <shortName evidence="5">SSRP</shortName>
    </alternativeName>
</protein>
<comment type="function">
    <text evidence="2">Moderately activates human somatostatin receptors (SSTR) with a specific activation of SSTR1 (EC(50)=2.9 uM) and SSTR4 (EC(50)=5.1 uM). In vivo, does not cause behavioral changes in mice within a few minutes of intracranial injection, but causes a progressive loss of movement thereafter. Four to five hours after injection, mice recover, even with the highest dose tested (5.4 mg/kg). Shows antinociception and antihyperalgesia activities in two mouse models of acute pain, most probably by acting outside the central nervous system.</text>
</comment>
<comment type="subcellular location">
    <subcellularLocation>
        <location evidence="2">Secreted</location>
    </subcellularLocation>
</comment>
<comment type="tissue specificity">
    <text evidence="7">Expressed by the venom duct.</text>
</comment>
<comment type="domain">
    <text>The cysteine framework is C-C.</text>
</comment>
<comment type="mass spectrometry" mass="1573.65" method="Electrospray" evidence="2"/>
<comment type="biotechnology">
    <text evidence="7">May represent a new lead for the potential development of an analgesic that acts via opioid-independent pathways.</text>
</comment>
<comment type="miscellaneous">
    <text evidence="3">Consomatins evolved by gene duplication of a 'Somatostatin and related peptides (SSRP)' gene expressed in the snail neuroendocrine system. In addition, this peptide adopts nearly identical conformations as in the somatostatin drug analog Octreotide. As this drug, it contains a D-Trp at the same position, whose synthesis is a common strategy used for enhancing the metabolic stability of compounds in drug design.</text>
</comment>
<comment type="miscellaneous">
    <text evidence="2">Negative results: does not activate any of the other 313 GPCRs tested. Shows little or no activating activity at the SSTR2, SSTR3 and SSTR5.</text>
</comment>
<comment type="similarity">
    <text evidence="6">Belongs to the conotoxin C superfamily. Consomatin family.</text>
</comment>
<organism>
    <name type="scientific">Conus rolani</name>
    <name type="common">Cone snail</name>
    <dbReference type="NCBI Taxonomy" id="745791"/>
    <lineage>
        <taxon>Eukaryota</taxon>
        <taxon>Metazoa</taxon>
        <taxon>Spiralia</taxon>
        <taxon>Lophotrochozoa</taxon>
        <taxon>Mollusca</taxon>
        <taxon>Gastropoda</taxon>
        <taxon>Caenogastropoda</taxon>
        <taxon>Neogastropoda</taxon>
        <taxon>Conoidea</taxon>
        <taxon>Conidae</taxon>
        <taxon>Conus</taxon>
        <taxon>Asprella</taxon>
    </lineage>
</organism>
<reference key="1">
    <citation type="journal article" date="2022" name="Sci. Adv.">
        <title>Somatostatin venom analogs evolved by fish-hunting cone snails: from prey capture behavior to identifying drug leads.</title>
        <authorList>
            <person name="Ramiro I.B.L."/>
            <person name="Bjoern-Yoshimoto W.E."/>
            <person name="Imperial J.S."/>
            <person name="Gajewiak J."/>
            <person name="Salcedo P.F."/>
            <person name="Watkins M."/>
            <person name="Taylor D."/>
            <person name="Resager W."/>
            <person name="Ueberheide B."/>
            <person name="Braeuner-Osborne H."/>
            <person name="Whitby F.G."/>
            <person name="Hill C.P."/>
            <person name="Martin L.F."/>
            <person name="Patwardhan A."/>
            <person name="Concepcion G.P."/>
            <person name="Olivera B.M."/>
            <person name="Safavi-Hemami H."/>
        </authorList>
    </citation>
    <scope>NUCLEOTIDE SEQUENCE [MRNA]</scope>
    <scope>PROTEIN SEQUENCE OF 58-70</scope>
    <scope>FUNCTION</scope>
    <scope>X-RAY CRYSTALLOGRAPHY (1.95 ANGSTROMS) OF 58-70</scope>
    <scope>SUBCELLULAR LOCATION</scope>
    <scope>MASS SPECTROMETRY</scope>
    <scope>GAMMA-CARBOXYGLUTAMATION AT GLU-58</scope>
    <scope>D-AMINO ACID AT TRP-64</scope>
    <scope>HYDROXYLATION AT PRO-69</scope>
    <scope>DISULFIDE BOND</scope>
    <scope>BIOASSAY</scope>
    <scope>SYNTHESIS OF 58-70</scope>
    <scope>BIOTECHNOLOGY</scope>
    <source>
        <tissue>Venom</tissue>
        <tissue>Venom duct</tissue>
    </source>
</reference>
<reference key="2">
    <citation type="journal article" date="2022" name="Mol. Biol. Evol.">
        <title>Reconstructing the origins of the somatostatin and allatostatin-C signaling systems using the accelerated evolution of biodiverse cone snail venoms.</title>
        <authorList>
            <person name="Koch T.L."/>
            <person name="Ramiro I.B.L."/>
            <person name="Florez-Salcedo P."/>
            <person name="Engholm E."/>
            <person name="Jensen K.J."/>
            <person name="Chase K."/>
            <person name="Olivera B.M."/>
            <person name="Bjoern-Yoshimoto W.E."/>
            <person name="Safavi-Hemami H."/>
        </authorList>
    </citation>
    <scope>NUCLEOTIDE SEQUENCE [MRNA]</scope>
    <source>
        <tissue>Venom duct</tissue>
    </source>
</reference>
<dbReference type="GO" id="GO:0005576">
    <property type="term" value="C:extracellular region"/>
    <property type="evidence" value="ECO:0007669"/>
    <property type="project" value="UniProtKB-SubCell"/>
</dbReference>
<dbReference type="GO" id="GO:0090729">
    <property type="term" value="F:toxin activity"/>
    <property type="evidence" value="ECO:0007669"/>
    <property type="project" value="UniProtKB-KW"/>
</dbReference>
<name>CSST1_CONRO</name>
<proteinExistence type="evidence at protein level"/>
<accession>P0DQT5</accession>
<evidence type="ECO:0000255" key="1"/>
<evidence type="ECO:0000269" key="2">
    <source>
    </source>
</evidence>
<evidence type="ECO:0000269" key="3">
    <source>
    </source>
</evidence>
<evidence type="ECO:0000303" key="4">
    <source>
    </source>
</evidence>
<evidence type="ECO:0000303" key="5">
    <source>
    </source>
</evidence>
<evidence type="ECO:0000305" key="6"/>
<evidence type="ECO:0000305" key="7">
    <source>
    </source>
</evidence>
<evidence type="ECO:0000305" key="8">
    <source>
    </source>
</evidence>
<sequence length="81" mass="9461">MQTAYWVMVMMMVWITAPLSEGGKPNDVIRGLVPDDLTPQLILRSLISRRRSDKDVREGYKCVWKTCMPALWRRHDLKGKD</sequence>
<feature type="signal peptide" evidence="1">
    <location>
        <begin position="1"/>
        <end position="22"/>
    </location>
</feature>
<feature type="propeptide" id="PRO_0000456104" evidence="8">
    <location>
        <begin position="23"/>
        <end position="57"/>
    </location>
</feature>
<feature type="peptide" id="PRO_0000456105" description="Consomatin Ro1" evidence="3">
    <location>
        <begin position="58"/>
        <end position="70"/>
    </location>
</feature>
<feature type="propeptide" id="PRO_0000456106" evidence="8">
    <location>
        <begin position="71"/>
        <end position="81"/>
    </location>
</feature>
<feature type="modified residue" description="4-carboxyglutamate" evidence="3">
    <location>
        <position position="58"/>
    </location>
</feature>
<feature type="modified residue" description="D-tryptophan" evidence="3">
    <location>
        <position position="64"/>
    </location>
</feature>
<feature type="modified residue" description="4-hydroxyproline" evidence="3">
    <location>
        <position position="69"/>
    </location>
</feature>
<feature type="disulfide bond" evidence="3">
    <location>
        <begin position="62"/>
        <end position="67"/>
    </location>
</feature>